<evidence type="ECO:0000255" key="1"/>
<evidence type="ECO:0000305" key="2"/>
<comment type="similarity">
    <text evidence="2">Belongs to the WEB family.</text>
</comment>
<comment type="sequence caution" evidence="2">
    <conflict type="erroneous termination">
        <sequence resource="EMBL-CDS" id="ABK28495"/>
    </conflict>
    <text>Extended C-terminus.</text>
</comment>
<dbReference type="EMBL" id="AC006201">
    <property type="protein sequence ID" value="AAD20132.1"/>
    <property type="molecule type" value="Genomic_DNA"/>
</dbReference>
<dbReference type="EMBL" id="CP002685">
    <property type="protein sequence ID" value="AEC06703.1"/>
    <property type="molecule type" value="Genomic_DNA"/>
</dbReference>
<dbReference type="EMBL" id="DQ652995">
    <property type="protein sequence ID" value="ABK28495.1"/>
    <property type="status" value="ALT_SEQ"/>
    <property type="molecule type" value="mRNA"/>
</dbReference>
<dbReference type="EMBL" id="AY085822">
    <property type="protein sequence ID" value="AAM63038.1"/>
    <property type="molecule type" value="mRNA"/>
</dbReference>
<dbReference type="PIR" id="T00830">
    <property type="entry name" value="T00830"/>
</dbReference>
<dbReference type="RefSeq" id="NP_565428.1">
    <property type="nucleotide sequence ID" value="NM_127348.2"/>
</dbReference>
<dbReference type="SMR" id="O48822"/>
<dbReference type="STRING" id="3702.O48822"/>
<dbReference type="PaxDb" id="3702-AT2G17940.1"/>
<dbReference type="EnsemblPlants" id="AT2G17940.1">
    <property type="protein sequence ID" value="AT2G17940.1"/>
    <property type="gene ID" value="AT2G17940"/>
</dbReference>
<dbReference type="GeneID" id="816304"/>
<dbReference type="Gramene" id="AT2G17940.1">
    <property type="protein sequence ID" value="AT2G17940.1"/>
    <property type="gene ID" value="AT2G17940"/>
</dbReference>
<dbReference type="KEGG" id="ath:AT2G17940"/>
<dbReference type="Araport" id="AT2G17940"/>
<dbReference type="TAIR" id="AT2G17940"/>
<dbReference type="eggNOG" id="ENOG502S0WJ">
    <property type="taxonomic scope" value="Eukaryota"/>
</dbReference>
<dbReference type="HOGENOM" id="CLU_078358_1_0_1"/>
<dbReference type="InParanoid" id="O48822"/>
<dbReference type="OMA" id="GWFRATR"/>
<dbReference type="PhylomeDB" id="O48822"/>
<dbReference type="PRO" id="PR:O48822"/>
<dbReference type="Proteomes" id="UP000006548">
    <property type="component" value="Chromosome 2"/>
</dbReference>
<dbReference type="ExpressionAtlas" id="O48822">
    <property type="expression patterns" value="baseline and differential"/>
</dbReference>
<name>Y2794_ARATH</name>
<proteinExistence type="evidence at transcript level"/>
<keyword id="KW-0175">Coiled coil</keyword>
<keyword id="KW-1185">Reference proteome</keyword>
<feature type="chain" id="PRO_0000414070" description="WEB family protein At2g17940">
    <location>
        <begin position="1"/>
        <end position="208"/>
    </location>
</feature>
<feature type="coiled-coil region" evidence="1">
    <location>
        <begin position="78"/>
        <end position="113"/>
    </location>
</feature>
<protein>
    <recommendedName>
        <fullName>WEB family protein At2g17940</fullName>
    </recommendedName>
</protein>
<gene>
    <name type="ordered locus">At2g17940</name>
    <name type="ORF">T27K22.19</name>
</gene>
<organism>
    <name type="scientific">Arabidopsis thaliana</name>
    <name type="common">Mouse-ear cress</name>
    <dbReference type="NCBI Taxonomy" id="3702"/>
    <lineage>
        <taxon>Eukaryota</taxon>
        <taxon>Viridiplantae</taxon>
        <taxon>Streptophyta</taxon>
        <taxon>Embryophyta</taxon>
        <taxon>Tracheophyta</taxon>
        <taxon>Spermatophyta</taxon>
        <taxon>Magnoliopsida</taxon>
        <taxon>eudicotyledons</taxon>
        <taxon>Gunneridae</taxon>
        <taxon>Pentapetalae</taxon>
        <taxon>rosids</taxon>
        <taxon>malvids</taxon>
        <taxon>Brassicales</taxon>
        <taxon>Brassicaceae</taxon>
        <taxon>Camelineae</taxon>
        <taxon>Arabidopsis</taxon>
    </lineage>
</organism>
<sequence length="208" mass="23909">MERGNVWRSGRAEIETKAAFGSVKEAVAMFGEKVLAGEIYATRLREIRTKETNSTPSSLSRLPSLTLELEQTKQTLTRTLQLNTSLSNRIKTLTQELELGKKEIQRLSRTRSSRLDNPEIEELKFVEQHQTMTSNDFEEEVVTTEELEKRRLVTFASSPLLTRVMSSVGDEEERNKKEKDFERDCSVKKTKLKKGFAPFMGWFRATRG</sequence>
<accession>O48822</accession>
<accession>A0MEM3</accession>
<reference key="1">
    <citation type="journal article" date="1999" name="Nature">
        <title>Sequence and analysis of chromosome 2 of the plant Arabidopsis thaliana.</title>
        <authorList>
            <person name="Lin X."/>
            <person name="Kaul S."/>
            <person name="Rounsley S.D."/>
            <person name="Shea T.P."/>
            <person name="Benito M.-I."/>
            <person name="Town C.D."/>
            <person name="Fujii C.Y."/>
            <person name="Mason T.M."/>
            <person name="Bowman C.L."/>
            <person name="Barnstead M.E."/>
            <person name="Feldblyum T.V."/>
            <person name="Buell C.R."/>
            <person name="Ketchum K.A."/>
            <person name="Lee J.J."/>
            <person name="Ronning C.M."/>
            <person name="Koo H.L."/>
            <person name="Moffat K.S."/>
            <person name="Cronin L.A."/>
            <person name="Shen M."/>
            <person name="Pai G."/>
            <person name="Van Aken S."/>
            <person name="Umayam L."/>
            <person name="Tallon L.J."/>
            <person name="Gill J.E."/>
            <person name="Adams M.D."/>
            <person name="Carrera A.J."/>
            <person name="Creasy T.H."/>
            <person name="Goodman H.M."/>
            <person name="Somerville C.R."/>
            <person name="Copenhaver G.P."/>
            <person name="Preuss D."/>
            <person name="Nierman W.C."/>
            <person name="White O."/>
            <person name="Eisen J.A."/>
            <person name="Salzberg S.L."/>
            <person name="Fraser C.M."/>
            <person name="Venter J.C."/>
        </authorList>
    </citation>
    <scope>NUCLEOTIDE SEQUENCE [LARGE SCALE GENOMIC DNA]</scope>
    <source>
        <strain>cv. Columbia</strain>
    </source>
</reference>
<reference key="2">
    <citation type="journal article" date="2017" name="Plant J.">
        <title>Araport11: a complete reannotation of the Arabidopsis thaliana reference genome.</title>
        <authorList>
            <person name="Cheng C.Y."/>
            <person name="Krishnakumar V."/>
            <person name="Chan A.P."/>
            <person name="Thibaud-Nissen F."/>
            <person name="Schobel S."/>
            <person name="Town C.D."/>
        </authorList>
    </citation>
    <scope>GENOME REANNOTATION</scope>
    <source>
        <strain>cv. Columbia</strain>
    </source>
</reference>
<reference key="3">
    <citation type="journal article" date="2006" name="Plant Biotechnol. J.">
        <title>Simultaneous high-throughput recombinational cloning of open reading frames in closed and open configurations.</title>
        <authorList>
            <person name="Underwood B.A."/>
            <person name="Vanderhaeghen R."/>
            <person name="Whitford R."/>
            <person name="Town C.D."/>
            <person name="Hilson P."/>
        </authorList>
    </citation>
    <scope>NUCLEOTIDE SEQUENCE [LARGE SCALE MRNA]</scope>
    <source>
        <strain>cv. Columbia</strain>
    </source>
</reference>
<reference key="4">
    <citation type="submission" date="2002-03" db="EMBL/GenBank/DDBJ databases">
        <title>Full-length cDNA from Arabidopsis thaliana.</title>
        <authorList>
            <person name="Brover V.V."/>
            <person name="Troukhan M.E."/>
            <person name="Alexandrov N.A."/>
            <person name="Lu Y.-P."/>
            <person name="Flavell R.B."/>
            <person name="Feldmann K.A."/>
        </authorList>
    </citation>
    <scope>NUCLEOTIDE SEQUENCE [LARGE SCALE MRNA]</scope>
</reference>